<feature type="transit peptide" description="Mitochondrion" evidence="1">
    <location>
        <begin position="1"/>
        <end status="unknown"/>
    </location>
</feature>
<feature type="chain" id="PRO_0000202969" description="ATP synthase assembly factor FMC1, mitochondrial">
    <location>
        <begin status="unknown"/>
        <end position="155"/>
    </location>
</feature>
<dbReference type="EMBL" id="Z38125">
    <property type="protein sequence ID" value="CAA86283.1"/>
    <property type="molecule type" value="Genomic_DNA"/>
</dbReference>
<dbReference type="EMBL" id="AY558072">
    <property type="protein sequence ID" value="AAS56398.1"/>
    <property type="molecule type" value="Genomic_DNA"/>
</dbReference>
<dbReference type="EMBL" id="BK006942">
    <property type="protein sequence ID" value="DAA08455.1"/>
    <property type="molecule type" value="Genomic_DNA"/>
</dbReference>
<dbReference type="PIR" id="S48475">
    <property type="entry name" value="S48475"/>
</dbReference>
<dbReference type="RefSeq" id="NP_012168.3">
    <property type="nucleotide sequence ID" value="NM_001179446.3"/>
</dbReference>
<dbReference type="SMR" id="P40491"/>
<dbReference type="BioGRID" id="34893">
    <property type="interactions" value="358"/>
</dbReference>
<dbReference type="DIP" id="DIP-5652N"/>
<dbReference type="FunCoup" id="P40491">
    <property type="interactions" value="117"/>
</dbReference>
<dbReference type="IntAct" id="P40491">
    <property type="interactions" value="2"/>
</dbReference>
<dbReference type="MINT" id="P40491"/>
<dbReference type="STRING" id="4932.YIL098C"/>
<dbReference type="PaxDb" id="4932-YIL098C"/>
<dbReference type="PeptideAtlas" id="P40491"/>
<dbReference type="EnsemblFungi" id="YIL098C_mRNA">
    <property type="protein sequence ID" value="YIL098C"/>
    <property type="gene ID" value="YIL098C"/>
</dbReference>
<dbReference type="GeneID" id="854709"/>
<dbReference type="KEGG" id="sce:YIL098C"/>
<dbReference type="AGR" id="SGD:S000001360"/>
<dbReference type="SGD" id="S000001360">
    <property type="gene designation" value="FMC1"/>
</dbReference>
<dbReference type="VEuPathDB" id="FungiDB:YIL098C"/>
<dbReference type="eggNOG" id="ENOG502SD6J">
    <property type="taxonomic scope" value="Eukaryota"/>
</dbReference>
<dbReference type="HOGENOM" id="CLU_128881_1_0_1"/>
<dbReference type="InParanoid" id="P40491"/>
<dbReference type="OMA" id="HRVGFEL"/>
<dbReference type="OrthoDB" id="15893at2759"/>
<dbReference type="BioCyc" id="YEAST:G3O-31357-MONOMER"/>
<dbReference type="BioGRID-ORCS" id="854709">
    <property type="hits" value="0 hits in 10 CRISPR screens"/>
</dbReference>
<dbReference type="PRO" id="PR:P40491"/>
<dbReference type="Proteomes" id="UP000002311">
    <property type="component" value="Chromosome IX"/>
</dbReference>
<dbReference type="RNAct" id="P40491">
    <property type="molecule type" value="protein"/>
</dbReference>
<dbReference type="GO" id="GO:0005759">
    <property type="term" value="C:mitochondrial matrix"/>
    <property type="evidence" value="ECO:0000314"/>
    <property type="project" value="SGD"/>
</dbReference>
<dbReference type="GO" id="GO:0005739">
    <property type="term" value="C:mitochondrion"/>
    <property type="evidence" value="ECO:0007005"/>
    <property type="project" value="SGD"/>
</dbReference>
<dbReference type="GO" id="GO:0016236">
    <property type="term" value="P:macroautophagy"/>
    <property type="evidence" value="ECO:0000315"/>
    <property type="project" value="SGD"/>
</dbReference>
<dbReference type="GO" id="GO:0033615">
    <property type="term" value="P:mitochondrial proton-transporting ATP synthase complex assembly"/>
    <property type="evidence" value="ECO:0000315"/>
    <property type="project" value="SGD"/>
</dbReference>
<dbReference type="InterPro" id="IPR039196">
    <property type="entry name" value="Fmc1"/>
</dbReference>
<dbReference type="PANTHER" id="PTHR28015">
    <property type="entry name" value="ATP SYNTHASE ASSEMBLY FACTOR FMC1, MITOCHONDRIAL"/>
    <property type="match status" value="1"/>
</dbReference>
<dbReference type="PANTHER" id="PTHR28015:SF1">
    <property type="entry name" value="ATP SYNTHASE ASSEMBLY FACTOR FMC1, MITOCHONDRIAL"/>
    <property type="match status" value="1"/>
</dbReference>
<dbReference type="Pfam" id="PF13233">
    <property type="entry name" value="Complex1_LYR_2"/>
    <property type="match status" value="1"/>
</dbReference>
<organism>
    <name type="scientific">Saccharomyces cerevisiae (strain ATCC 204508 / S288c)</name>
    <name type="common">Baker's yeast</name>
    <dbReference type="NCBI Taxonomy" id="559292"/>
    <lineage>
        <taxon>Eukaryota</taxon>
        <taxon>Fungi</taxon>
        <taxon>Dikarya</taxon>
        <taxon>Ascomycota</taxon>
        <taxon>Saccharomycotina</taxon>
        <taxon>Saccharomycetes</taxon>
        <taxon>Saccharomycetales</taxon>
        <taxon>Saccharomycetaceae</taxon>
        <taxon>Saccharomyces</taxon>
    </lineage>
</organism>
<comment type="function">
    <text evidence="2">Needed for the assembly of the mitochondrial F1-F0 complex at high temperature.</text>
</comment>
<comment type="interaction">
    <interactant intactId="EBI-25141">
        <id>P40491</id>
    </interactant>
    <interactant intactId="EBI-3312">
        <id>P22135</id>
        <label>ATP12</label>
    </interactant>
    <organismsDiffer>false</organismsDiffer>
    <experiments>2</experiments>
</comment>
<comment type="subcellular location">
    <subcellularLocation>
        <location evidence="2 3 5">Mitochondrion</location>
    </subcellularLocation>
</comment>
<comment type="miscellaneous">
    <text evidence="4">Present with 589 molecules/cell in log phase SD medium.</text>
</comment>
<comment type="similarity">
    <text evidence="6">Belongs to the FMC1 family.</text>
</comment>
<evidence type="ECO:0000255" key="1"/>
<evidence type="ECO:0000269" key="2">
    <source>
    </source>
</evidence>
<evidence type="ECO:0000269" key="3">
    <source>
    </source>
</evidence>
<evidence type="ECO:0000269" key="4">
    <source>
    </source>
</evidence>
<evidence type="ECO:0000269" key="5">
    <source>
    </source>
</evidence>
<evidence type="ECO:0000305" key="6"/>
<proteinExistence type="evidence at protein level"/>
<keyword id="KW-0496">Mitochondrion</keyword>
<keyword id="KW-1185">Reference proteome</keyword>
<keyword id="KW-0346">Stress response</keyword>
<keyword id="KW-0809">Transit peptide</keyword>
<reference key="1">
    <citation type="journal article" date="1997" name="Nature">
        <title>The nucleotide sequence of Saccharomyces cerevisiae chromosome IX.</title>
        <authorList>
            <person name="Churcher C.M."/>
            <person name="Bowman S."/>
            <person name="Badcock K."/>
            <person name="Bankier A.T."/>
            <person name="Brown D."/>
            <person name="Chillingworth T."/>
            <person name="Connor R."/>
            <person name="Devlin K."/>
            <person name="Gentles S."/>
            <person name="Hamlin N."/>
            <person name="Harris D.E."/>
            <person name="Horsnell T."/>
            <person name="Hunt S."/>
            <person name="Jagels K."/>
            <person name="Jones M."/>
            <person name="Lye G."/>
            <person name="Moule S."/>
            <person name="Odell C."/>
            <person name="Pearson D."/>
            <person name="Rajandream M.A."/>
            <person name="Rice P."/>
            <person name="Rowley N."/>
            <person name="Skelton J."/>
            <person name="Smith V."/>
            <person name="Walsh S.V."/>
            <person name="Whitehead S."/>
            <person name="Barrell B.G."/>
        </authorList>
    </citation>
    <scope>NUCLEOTIDE SEQUENCE [LARGE SCALE GENOMIC DNA]</scope>
    <source>
        <strain>ATCC 204508 / S288c</strain>
    </source>
</reference>
<reference key="2">
    <citation type="journal article" date="2014" name="G3 (Bethesda)">
        <title>The reference genome sequence of Saccharomyces cerevisiae: Then and now.</title>
        <authorList>
            <person name="Engel S.R."/>
            <person name="Dietrich F.S."/>
            <person name="Fisk D.G."/>
            <person name="Binkley G."/>
            <person name="Balakrishnan R."/>
            <person name="Costanzo M.C."/>
            <person name="Dwight S.S."/>
            <person name="Hitz B.C."/>
            <person name="Karra K."/>
            <person name="Nash R.S."/>
            <person name="Weng S."/>
            <person name="Wong E.D."/>
            <person name="Lloyd P."/>
            <person name="Skrzypek M.S."/>
            <person name="Miyasato S.R."/>
            <person name="Simison M."/>
            <person name="Cherry J.M."/>
        </authorList>
    </citation>
    <scope>GENOME REANNOTATION</scope>
    <source>
        <strain>ATCC 204508 / S288c</strain>
    </source>
</reference>
<reference key="3">
    <citation type="journal article" date="2007" name="Genome Res.">
        <title>Approaching a complete repository of sequence-verified protein-encoding clones for Saccharomyces cerevisiae.</title>
        <authorList>
            <person name="Hu Y."/>
            <person name="Rolfs A."/>
            <person name="Bhullar B."/>
            <person name="Murthy T.V.S."/>
            <person name="Zhu C."/>
            <person name="Berger M.F."/>
            <person name="Camargo A.A."/>
            <person name="Kelley F."/>
            <person name="McCarron S."/>
            <person name="Jepson D."/>
            <person name="Richardson A."/>
            <person name="Raphael J."/>
            <person name="Moreira D."/>
            <person name="Taycher E."/>
            <person name="Zuo D."/>
            <person name="Mohr S."/>
            <person name="Kane M.F."/>
            <person name="Williamson J."/>
            <person name="Simpson A.J.G."/>
            <person name="Bulyk M.L."/>
            <person name="Harlow E."/>
            <person name="Marsischky G."/>
            <person name="Kolodner R.D."/>
            <person name="LaBaer J."/>
        </authorList>
    </citation>
    <scope>NUCLEOTIDE SEQUENCE [GENOMIC DNA]</scope>
    <source>
        <strain>ATCC 204508 / S288c</strain>
    </source>
</reference>
<reference key="4">
    <citation type="journal article" date="2001" name="J. Biol. Chem.">
        <title>Identification of a nuclear gene (FMC1) required for the assembly/stability of yeast mitochondrial F(1)-ATPase in heat stress conditions.</title>
        <authorList>
            <person name="Lefebvre-Legendre L."/>
            <person name="Vaillier J."/>
            <person name="Benabdelhak H."/>
            <person name="Velours J."/>
            <person name="Slonimski P.P."/>
            <person name="di Rago J.-P."/>
        </authorList>
    </citation>
    <scope>FUNCTION</scope>
    <scope>SUBCELLULAR LOCATION</scope>
</reference>
<reference key="5">
    <citation type="journal article" date="2003" name="Nature">
        <title>Global analysis of protein localization in budding yeast.</title>
        <authorList>
            <person name="Huh W.-K."/>
            <person name="Falvo J.V."/>
            <person name="Gerke L.C."/>
            <person name="Carroll A.S."/>
            <person name="Howson R.W."/>
            <person name="Weissman J.S."/>
            <person name="O'Shea E.K."/>
        </authorList>
    </citation>
    <scope>SUBCELLULAR LOCATION [LARGE SCALE ANALYSIS]</scope>
</reference>
<reference key="6">
    <citation type="journal article" date="2003" name="Proc. Natl. Acad. Sci. U.S.A.">
        <title>The proteome of Saccharomyces cerevisiae mitochondria.</title>
        <authorList>
            <person name="Sickmann A."/>
            <person name="Reinders J."/>
            <person name="Wagner Y."/>
            <person name="Joppich C."/>
            <person name="Zahedi R.P."/>
            <person name="Meyer H.E."/>
            <person name="Schoenfisch B."/>
            <person name="Perschil I."/>
            <person name="Chacinska A."/>
            <person name="Guiard B."/>
            <person name="Rehling P."/>
            <person name="Pfanner N."/>
            <person name="Meisinger C."/>
        </authorList>
    </citation>
    <scope>SUBCELLULAR LOCATION [LARGE SCALE ANALYSIS]</scope>
    <source>
        <strain>ATCC 76625 / YPH499</strain>
    </source>
</reference>
<reference key="7">
    <citation type="journal article" date="2003" name="Nature">
        <title>Global analysis of protein expression in yeast.</title>
        <authorList>
            <person name="Ghaemmaghami S."/>
            <person name="Huh W.-K."/>
            <person name="Bower K."/>
            <person name="Howson R.W."/>
            <person name="Belle A."/>
            <person name="Dephoure N."/>
            <person name="O'Shea E.K."/>
            <person name="Weissman J.S."/>
        </authorList>
    </citation>
    <scope>LEVEL OF PROTEIN EXPRESSION [LARGE SCALE ANALYSIS]</scope>
</reference>
<protein>
    <recommendedName>
        <fullName>ATP synthase assembly factor FMC1, mitochondrial</fullName>
    </recommendedName>
    <alternativeName>
        <fullName>Formation of mitochondrial complexes protein 1</fullName>
    </alternativeName>
</protein>
<sequence>MDRPRTLRTYRGLIRAILKYERPSKIVNWGNLRKAMITKLEYAKKQNQRDSHENINRQLEKWKKLDPVSDRSLNLFIADSKSLRSILQNDIKWEKKVAQGQNVDEIFEHALDIIKFLDNQREYEELVDRYNPGNKLTQDEKVKRTANVVGLDVPT</sequence>
<accession>P40491</accession>
<accession>D6VVI9</accession>
<gene>
    <name type="primary">FMC1</name>
    <name type="ordered locus">YIL098C</name>
</gene>
<name>FMC1_YEAST</name>